<feature type="chain" id="PRO_0000057629" description="UPF0282 protein APE_0500.1">
    <location>
        <begin position="1"/>
        <end position="294"/>
    </location>
</feature>
<sequence>MRVEIVAADSLGVRSIATFVEACGYSIGVDLGASIAPRRFSLPPHPRELRRLEQALDRARRRLEESNIAIITHYHYDHYLRDEPELYAGRLLLAKDINRSINRSQRFRGYRFLVKSGLVERGRVEYADSRVFRLEGGLTIEFSKPVWHGEEGTKLGKVLMVRITCEGVSIVFASDVQGPGNNEALEELLKWSKPRPLVLIISGPPLYLGGYRVGMSSVELGIRNLEVLAERLRPKRLVVDHHLVRDPRFPEVLERLRGRAAGAGVEVLTAAEYMGLRPEPLETMRRELWKGEEG</sequence>
<reference key="1">
    <citation type="journal article" date="1999" name="DNA Res.">
        <title>Complete genome sequence of an aerobic hyper-thermophilic crenarchaeon, Aeropyrum pernix K1.</title>
        <authorList>
            <person name="Kawarabayasi Y."/>
            <person name="Hino Y."/>
            <person name="Horikawa H."/>
            <person name="Yamazaki S."/>
            <person name="Haikawa Y."/>
            <person name="Jin-no K."/>
            <person name="Takahashi M."/>
            <person name="Sekine M."/>
            <person name="Baba S."/>
            <person name="Ankai A."/>
            <person name="Kosugi H."/>
            <person name="Hosoyama A."/>
            <person name="Fukui S."/>
            <person name="Nagai Y."/>
            <person name="Nishijima K."/>
            <person name="Nakazawa H."/>
            <person name="Takamiya M."/>
            <person name="Masuda S."/>
            <person name="Funahashi T."/>
            <person name="Tanaka T."/>
            <person name="Kudoh Y."/>
            <person name="Yamazaki J."/>
            <person name="Kushida N."/>
            <person name="Oguchi A."/>
            <person name="Aoki K."/>
            <person name="Kubota K."/>
            <person name="Nakamura Y."/>
            <person name="Nomura N."/>
            <person name="Sako Y."/>
            <person name="Kikuchi H."/>
        </authorList>
    </citation>
    <scope>NUCLEOTIDE SEQUENCE [LARGE SCALE GENOMIC DNA]</scope>
    <source>
        <strain>ATCC 700893 / DSM 11879 / JCM 9820 / NBRC 100138 / K1</strain>
    </source>
</reference>
<comment type="similarity">
    <text evidence="1">Belongs to the UPF0282 family.</text>
</comment>
<proteinExistence type="inferred from homology"/>
<evidence type="ECO:0000255" key="1">
    <source>
        <dbReference type="HAMAP-Rule" id="MF_01406"/>
    </source>
</evidence>
<accession>Q9YET1</accession>
<gene>
    <name type="ordered locus">APE_0500.1</name>
</gene>
<protein>
    <recommendedName>
        <fullName evidence="1">UPF0282 protein APE_0500.1</fullName>
    </recommendedName>
</protein>
<keyword id="KW-1185">Reference proteome</keyword>
<dbReference type="EMBL" id="BA000002">
    <property type="protein sequence ID" value="BAA79465.2"/>
    <property type="molecule type" value="Genomic_DNA"/>
</dbReference>
<dbReference type="PIR" id="E72746">
    <property type="entry name" value="E72746"/>
</dbReference>
<dbReference type="STRING" id="272557.APE_0500.1"/>
<dbReference type="EnsemblBacteria" id="BAA79465">
    <property type="protein sequence ID" value="BAA79465"/>
    <property type="gene ID" value="APE_0500.1"/>
</dbReference>
<dbReference type="KEGG" id="ape:APE_0500.1"/>
<dbReference type="PATRIC" id="fig|272557.25.peg.378"/>
<dbReference type="eggNOG" id="arCOG00969">
    <property type="taxonomic scope" value="Archaea"/>
</dbReference>
<dbReference type="Proteomes" id="UP000002518">
    <property type="component" value="Chromosome"/>
</dbReference>
<dbReference type="Gene3D" id="3.60.15.10">
    <property type="entry name" value="Ribonuclease Z/Hydroxyacylglutathione hydrolase-like"/>
    <property type="match status" value="1"/>
</dbReference>
<dbReference type="HAMAP" id="MF_01406">
    <property type="entry name" value="UPF0282"/>
    <property type="match status" value="1"/>
</dbReference>
<dbReference type="InterPro" id="IPR036866">
    <property type="entry name" value="RibonucZ/Hydroxyglut_hydro"/>
</dbReference>
<dbReference type="InterPro" id="IPR050114">
    <property type="entry name" value="UPF0173_UPF0282_UlaG_hydrolase"/>
</dbReference>
<dbReference type="InterPro" id="IPR014426">
    <property type="entry name" value="UPF0282_hydrls"/>
</dbReference>
<dbReference type="PANTHER" id="PTHR43546">
    <property type="entry name" value="UPF0173 METAL-DEPENDENT HYDROLASE MJ1163-RELATED"/>
    <property type="match status" value="1"/>
</dbReference>
<dbReference type="PANTHER" id="PTHR43546:SF4">
    <property type="entry name" value="UPF0282 PROTEIN MJ1629"/>
    <property type="match status" value="1"/>
</dbReference>
<dbReference type="PIRSF" id="PIRSF004944">
    <property type="entry name" value="UCP004944_hydrls"/>
    <property type="match status" value="1"/>
</dbReference>
<dbReference type="SUPFAM" id="SSF56281">
    <property type="entry name" value="Metallo-hydrolase/oxidoreductase"/>
    <property type="match status" value="1"/>
</dbReference>
<organism>
    <name type="scientific">Aeropyrum pernix (strain ATCC 700893 / DSM 11879 / JCM 9820 / NBRC 100138 / K1)</name>
    <dbReference type="NCBI Taxonomy" id="272557"/>
    <lineage>
        <taxon>Archaea</taxon>
        <taxon>Thermoproteota</taxon>
        <taxon>Thermoprotei</taxon>
        <taxon>Desulfurococcales</taxon>
        <taxon>Desulfurococcaceae</taxon>
        <taxon>Aeropyrum</taxon>
    </lineage>
</organism>
<name>Y500_AERPE</name>